<sequence length="484" mass="54891">MKLIVKTFQEITIKSRPVRKRFIRQLAKNIRAVLRDLDPELKVEGEWDNLEVETAVVDAKVRREMIERLTCTPGIGHFLEVHEYPLGDFDDILAKCKAHFGDQLAGKTFAVRCKRAGKHAFTSMEVERYVGSGLRRECGAAGIDLKQPEVEVRMEIRLDRLFVIHRQHPGLGGYPLGALEQVLVLMSGGFDSTVAAYQMMRRGMISHFVFFNLGGRAHELGVMEVAHYLWEKYGRSQRVLFISVPFEEVVGEILTKVDDSYMGVTLKRMMLRAASRVAERLELDALVTGEAISQVSSQTLPNLSVIDRVTDTLVLRPLIVSHKQDIIDTARQIGTAEFARHMPEYCGVISVNPTTQAKPYRVEHEESKFDMAVLERALERATQRTVDRVIDELGQDLQVEEVGEVLPGQIVIDIRHPDAQEDEPLALEGVEVQALPFYAINSRFKELDANRQYLLYCDKGVMSRLHAHHLLNEGHTNVRVYRPA</sequence>
<organism>
    <name type="scientific">Pseudomonas aeruginosa (strain UCBPP-PA14)</name>
    <dbReference type="NCBI Taxonomy" id="208963"/>
    <lineage>
        <taxon>Bacteria</taxon>
        <taxon>Pseudomonadati</taxon>
        <taxon>Pseudomonadota</taxon>
        <taxon>Gammaproteobacteria</taxon>
        <taxon>Pseudomonadales</taxon>
        <taxon>Pseudomonadaceae</taxon>
        <taxon>Pseudomonas</taxon>
    </lineage>
</organism>
<gene>
    <name evidence="1" type="primary">thiI</name>
    <name type="ordered locus">PA14_67580</name>
</gene>
<proteinExistence type="inferred from homology"/>
<protein>
    <recommendedName>
        <fullName evidence="1">tRNA sulfurtransferase</fullName>
        <ecNumber evidence="1">2.8.1.4</ecNumber>
    </recommendedName>
    <alternativeName>
        <fullName evidence="1">Sulfur carrier protein ThiS sulfurtransferase</fullName>
    </alternativeName>
    <alternativeName>
        <fullName evidence="1">Thiamine biosynthesis protein ThiI</fullName>
    </alternativeName>
    <alternativeName>
        <fullName evidence="1">tRNA 4-thiouridine synthase</fullName>
    </alternativeName>
</protein>
<reference key="1">
    <citation type="journal article" date="2006" name="Genome Biol.">
        <title>Genomic analysis reveals that Pseudomonas aeruginosa virulence is combinatorial.</title>
        <authorList>
            <person name="Lee D.G."/>
            <person name="Urbach J.M."/>
            <person name="Wu G."/>
            <person name="Liberati N.T."/>
            <person name="Feinbaum R.L."/>
            <person name="Miyata S."/>
            <person name="Diggins L.T."/>
            <person name="He J."/>
            <person name="Saucier M."/>
            <person name="Deziel E."/>
            <person name="Friedman L."/>
            <person name="Li L."/>
            <person name="Grills G."/>
            <person name="Montgomery K."/>
            <person name="Kucherlapati R."/>
            <person name="Rahme L.G."/>
            <person name="Ausubel F.M."/>
        </authorList>
    </citation>
    <scope>NUCLEOTIDE SEQUENCE [LARGE SCALE GENOMIC DNA]</scope>
    <source>
        <strain>UCBPP-PA14</strain>
    </source>
</reference>
<accession>Q02EP8</accession>
<dbReference type="EC" id="2.8.1.4" evidence="1"/>
<dbReference type="EMBL" id="CP000438">
    <property type="protein sequence ID" value="ABJ14501.1"/>
    <property type="molecule type" value="Genomic_DNA"/>
</dbReference>
<dbReference type="RefSeq" id="WP_003141843.1">
    <property type="nucleotide sequence ID" value="NZ_CP034244.1"/>
</dbReference>
<dbReference type="SMR" id="Q02EP8"/>
<dbReference type="KEGG" id="pau:PA14_67580"/>
<dbReference type="PseudoCAP" id="PA14_67580"/>
<dbReference type="HOGENOM" id="CLU_037952_4_1_6"/>
<dbReference type="BioCyc" id="PAER208963:G1G74-5700-MONOMER"/>
<dbReference type="UniPathway" id="UPA00060"/>
<dbReference type="Proteomes" id="UP000000653">
    <property type="component" value="Chromosome"/>
</dbReference>
<dbReference type="GO" id="GO:0005829">
    <property type="term" value="C:cytosol"/>
    <property type="evidence" value="ECO:0007669"/>
    <property type="project" value="TreeGrafter"/>
</dbReference>
<dbReference type="GO" id="GO:0005524">
    <property type="term" value="F:ATP binding"/>
    <property type="evidence" value="ECO:0007669"/>
    <property type="project" value="UniProtKB-UniRule"/>
</dbReference>
<dbReference type="GO" id="GO:0004810">
    <property type="term" value="F:CCA tRNA nucleotidyltransferase activity"/>
    <property type="evidence" value="ECO:0007669"/>
    <property type="project" value="InterPro"/>
</dbReference>
<dbReference type="GO" id="GO:0000049">
    <property type="term" value="F:tRNA binding"/>
    <property type="evidence" value="ECO:0007669"/>
    <property type="project" value="UniProtKB-UniRule"/>
</dbReference>
<dbReference type="GO" id="GO:0140741">
    <property type="term" value="F:tRNA-uracil-4 sulfurtransferase activity"/>
    <property type="evidence" value="ECO:0007669"/>
    <property type="project" value="UniProtKB-EC"/>
</dbReference>
<dbReference type="GO" id="GO:0009228">
    <property type="term" value="P:thiamine biosynthetic process"/>
    <property type="evidence" value="ECO:0007669"/>
    <property type="project" value="UniProtKB-KW"/>
</dbReference>
<dbReference type="GO" id="GO:0009229">
    <property type="term" value="P:thiamine diphosphate biosynthetic process"/>
    <property type="evidence" value="ECO:0007669"/>
    <property type="project" value="UniProtKB-UniRule"/>
</dbReference>
<dbReference type="GO" id="GO:0052837">
    <property type="term" value="P:thiazole biosynthetic process"/>
    <property type="evidence" value="ECO:0007669"/>
    <property type="project" value="InterPro"/>
</dbReference>
<dbReference type="GO" id="GO:0002937">
    <property type="term" value="P:tRNA 4-thiouridine biosynthesis"/>
    <property type="evidence" value="ECO:0007669"/>
    <property type="project" value="TreeGrafter"/>
</dbReference>
<dbReference type="CDD" id="cd01712">
    <property type="entry name" value="PPase_ThiI"/>
    <property type="match status" value="1"/>
</dbReference>
<dbReference type="CDD" id="cd11716">
    <property type="entry name" value="THUMP_ThiI"/>
    <property type="match status" value="1"/>
</dbReference>
<dbReference type="FunFam" id="3.40.50.620:FF:000029">
    <property type="entry name" value="tRNA sulfurtransferase"/>
    <property type="match status" value="1"/>
</dbReference>
<dbReference type="Gene3D" id="3.30.2130.30">
    <property type="match status" value="1"/>
</dbReference>
<dbReference type="Gene3D" id="3.40.50.620">
    <property type="entry name" value="HUPs"/>
    <property type="match status" value="1"/>
</dbReference>
<dbReference type="Gene3D" id="3.40.250.10">
    <property type="entry name" value="Rhodanese-like domain"/>
    <property type="match status" value="1"/>
</dbReference>
<dbReference type="HAMAP" id="MF_00021">
    <property type="entry name" value="ThiI"/>
    <property type="match status" value="1"/>
</dbReference>
<dbReference type="InterPro" id="IPR001763">
    <property type="entry name" value="Rhodanese-like_dom"/>
</dbReference>
<dbReference type="InterPro" id="IPR036873">
    <property type="entry name" value="Rhodanese-like_dom_sf"/>
</dbReference>
<dbReference type="InterPro" id="IPR014729">
    <property type="entry name" value="Rossmann-like_a/b/a_fold"/>
</dbReference>
<dbReference type="InterPro" id="IPR020536">
    <property type="entry name" value="ThiI_AANH"/>
</dbReference>
<dbReference type="InterPro" id="IPR054173">
    <property type="entry name" value="ThiI_fer"/>
</dbReference>
<dbReference type="InterPro" id="IPR049961">
    <property type="entry name" value="ThiI_N"/>
</dbReference>
<dbReference type="InterPro" id="IPR026340">
    <property type="entry name" value="THII_Thiazole_biosynth_dom"/>
</dbReference>
<dbReference type="InterPro" id="IPR004114">
    <property type="entry name" value="THUMP_dom"/>
</dbReference>
<dbReference type="InterPro" id="IPR049962">
    <property type="entry name" value="THUMP_ThiI"/>
</dbReference>
<dbReference type="InterPro" id="IPR003720">
    <property type="entry name" value="tRNA_STrfase"/>
</dbReference>
<dbReference type="InterPro" id="IPR050102">
    <property type="entry name" value="tRNA_sulfurtransferase_ThiI"/>
</dbReference>
<dbReference type="NCBIfam" id="TIGR04271">
    <property type="entry name" value="ThiI_C_thiazole"/>
    <property type="match status" value="1"/>
</dbReference>
<dbReference type="NCBIfam" id="TIGR00342">
    <property type="entry name" value="tRNA uracil 4-sulfurtransferase ThiI"/>
    <property type="match status" value="1"/>
</dbReference>
<dbReference type="PANTHER" id="PTHR43209">
    <property type="entry name" value="TRNA SULFURTRANSFERASE"/>
    <property type="match status" value="1"/>
</dbReference>
<dbReference type="PANTHER" id="PTHR43209:SF1">
    <property type="entry name" value="TRNA SULFURTRANSFERASE"/>
    <property type="match status" value="1"/>
</dbReference>
<dbReference type="Pfam" id="PF02568">
    <property type="entry name" value="ThiI"/>
    <property type="match status" value="1"/>
</dbReference>
<dbReference type="Pfam" id="PF22025">
    <property type="entry name" value="ThiI_fer"/>
    <property type="match status" value="1"/>
</dbReference>
<dbReference type="Pfam" id="PF02926">
    <property type="entry name" value="THUMP"/>
    <property type="match status" value="1"/>
</dbReference>
<dbReference type="SMART" id="SM00981">
    <property type="entry name" value="THUMP"/>
    <property type="match status" value="1"/>
</dbReference>
<dbReference type="SUPFAM" id="SSF52402">
    <property type="entry name" value="Adenine nucleotide alpha hydrolases-like"/>
    <property type="match status" value="1"/>
</dbReference>
<dbReference type="SUPFAM" id="SSF52821">
    <property type="entry name" value="Rhodanese/Cell cycle control phosphatase"/>
    <property type="match status" value="1"/>
</dbReference>
<dbReference type="SUPFAM" id="SSF143437">
    <property type="entry name" value="THUMP domain-like"/>
    <property type="match status" value="1"/>
</dbReference>
<dbReference type="PROSITE" id="PS50206">
    <property type="entry name" value="RHODANESE_3"/>
    <property type="match status" value="1"/>
</dbReference>
<dbReference type="PROSITE" id="PS51165">
    <property type="entry name" value="THUMP"/>
    <property type="match status" value="1"/>
</dbReference>
<feature type="chain" id="PRO_1000074251" description="tRNA sulfurtransferase">
    <location>
        <begin position="1"/>
        <end position="484"/>
    </location>
</feature>
<feature type="domain" description="THUMP" evidence="1">
    <location>
        <begin position="63"/>
        <end position="167"/>
    </location>
</feature>
<feature type="domain" description="Rhodanese" evidence="1">
    <location>
        <begin position="405"/>
        <end position="483"/>
    </location>
</feature>
<feature type="active site" description="Cysteine persulfide intermediate" evidence="1">
    <location>
        <position position="457"/>
    </location>
</feature>
<feature type="binding site" evidence="1">
    <location>
        <begin position="185"/>
        <end position="186"/>
    </location>
    <ligand>
        <name>ATP</name>
        <dbReference type="ChEBI" id="CHEBI:30616"/>
    </ligand>
</feature>
<feature type="binding site" evidence="1">
    <location>
        <position position="267"/>
    </location>
    <ligand>
        <name>ATP</name>
        <dbReference type="ChEBI" id="CHEBI:30616"/>
    </ligand>
</feature>
<feature type="binding site" evidence="1">
    <location>
        <position position="289"/>
    </location>
    <ligand>
        <name>ATP</name>
        <dbReference type="ChEBI" id="CHEBI:30616"/>
    </ligand>
</feature>
<feature type="binding site" evidence="1">
    <location>
        <position position="298"/>
    </location>
    <ligand>
        <name>ATP</name>
        <dbReference type="ChEBI" id="CHEBI:30616"/>
    </ligand>
</feature>
<feature type="disulfide bond" description="Redox-active" evidence="1">
    <location>
        <begin position="346"/>
        <end position="457"/>
    </location>
</feature>
<evidence type="ECO:0000255" key="1">
    <source>
        <dbReference type="HAMAP-Rule" id="MF_00021"/>
    </source>
</evidence>
<keyword id="KW-0067">ATP-binding</keyword>
<keyword id="KW-0963">Cytoplasm</keyword>
<keyword id="KW-1015">Disulfide bond</keyword>
<keyword id="KW-0547">Nucleotide-binding</keyword>
<keyword id="KW-0676">Redox-active center</keyword>
<keyword id="KW-0694">RNA-binding</keyword>
<keyword id="KW-0784">Thiamine biosynthesis</keyword>
<keyword id="KW-0808">Transferase</keyword>
<keyword id="KW-0820">tRNA-binding</keyword>
<comment type="function">
    <text evidence="1">Catalyzes the ATP-dependent transfer of a sulfur to tRNA to produce 4-thiouridine in position 8 of tRNAs, which functions as a near-UV photosensor. Also catalyzes the transfer of sulfur to the sulfur carrier protein ThiS, forming ThiS-thiocarboxylate. This is a step in the synthesis of thiazole, in the thiamine biosynthesis pathway. The sulfur is donated as persulfide by IscS.</text>
</comment>
<comment type="catalytic activity">
    <reaction evidence="1">
        <text>[ThiI sulfur-carrier protein]-S-sulfanyl-L-cysteine + a uridine in tRNA + 2 reduced [2Fe-2S]-[ferredoxin] + ATP + H(+) = [ThiI sulfur-carrier protein]-L-cysteine + a 4-thiouridine in tRNA + 2 oxidized [2Fe-2S]-[ferredoxin] + AMP + diphosphate</text>
        <dbReference type="Rhea" id="RHEA:24176"/>
        <dbReference type="Rhea" id="RHEA-COMP:10000"/>
        <dbReference type="Rhea" id="RHEA-COMP:10001"/>
        <dbReference type="Rhea" id="RHEA-COMP:13337"/>
        <dbReference type="Rhea" id="RHEA-COMP:13338"/>
        <dbReference type="Rhea" id="RHEA-COMP:13339"/>
        <dbReference type="Rhea" id="RHEA-COMP:13340"/>
        <dbReference type="ChEBI" id="CHEBI:15378"/>
        <dbReference type="ChEBI" id="CHEBI:29950"/>
        <dbReference type="ChEBI" id="CHEBI:30616"/>
        <dbReference type="ChEBI" id="CHEBI:33019"/>
        <dbReference type="ChEBI" id="CHEBI:33737"/>
        <dbReference type="ChEBI" id="CHEBI:33738"/>
        <dbReference type="ChEBI" id="CHEBI:61963"/>
        <dbReference type="ChEBI" id="CHEBI:65315"/>
        <dbReference type="ChEBI" id="CHEBI:136798"/>
        <dbReference type="ChEBI" id="CHEBI:456215"/>
        <dbReference type="EC" id="2.8.1.4"/>
    </reaction>
</comment>
<comment type="catalytic activity">
    <reaction evidence="1">
        <text>[ThiS sulfur-carrier protein]-C-terminal Gly-Gly-AMP + S-sulfanyl-L-cysteinyl-[cysteine desulfurase] + AH2 = [ThiS sulfur-carrier protein]-C-terminal-Gly-aminoethanethioate + L-cysteinyl-[cysteine desulfurase] + A + AMP + 2 H(+)</text>
        <dbReference type="Rhea" id="RHEA:43340"/>
        <dbReference type="Rhea" id="RHEA-COMP:12157"/>
        <dbReference type="Rhea" id="RHEA-COMP:12158"/>
        <dbReference type="Rhea" id="RHEA-COMP:12910"/>
        <dbReference type="Rhea" id="RHEA-COMP:19908"/>
        <dbReference type="ChEBI" id="CHEBI:13193"/>
        <dbReference type="ChEBI" id="CHEBI:15378"/>
        <dbReference type="ChEBI" id="CHEBI:17499"/>
        <dbReference type="ChEBI" id="CHEBI:29950"/>
        <dbReference type="ChEBI" id="CHEBI:61963"/>
        <dbReference type="ChEBI" id="CHEBI:90618"/>
        <dbReference type="ChEBI" id="CHEBI:232372"/>
        <dbReference type="ChEBI" id="CHEBI:456215"/>
    </reaction>
</comment>
<comment type="pathway">
    <text evidence="1">Cofactor biosynthesis; thiamine diphosphate biosynthesis.</text>
</comment>
<comment type="subcellular location">
    <subcellularLocation>
        <location evidence="1">Cytoplasm</location>
    </subcellularLocation>
</comment>
<comment type="similarity">
    <text evidence="1">Belongs to the ThiI family.</text>
</comment>
<name>THII_PSEAB</name>